<reference key="1">
    <citation type="journal article" date="2002" name="Nature">
        <title>Sequence and analysis of chromosome 2 of Dictyostelium discoideum.</title>
        <authorList>
            <person name="Gloeckner G."/>
            <person name="Eichinger L."/>
            <person name="Szafranski K."/>
            <person name="Pachebat J.A."/>
            <person name="Bankier A.T."/>
            <person name="Dear P.H."/>
            <person name="Lehmann R."/>
            <person name="Baumgart C."/>
            <person name="Parra G."/>
            <person name="Abril J.F."/>
            <person name="Guigo R."/>
            <person name="Kumpf K."/>
            <person name="Tunggal B."/>
            <person name="Cox E.C."/>
            <person name="Quail M.A."/>
            <person name="Platzer M."/>
            <person name="Rosenthal A."/>
            <person name="Noegel A.A."/>
        </authorList>
    </citation>
    <scope>NUCLEOTIDE SEQUENCE [LARGE SCALE GENOMIC DNA]</scope>
    <source>
        <strain>AX4</strain>
    </source>
</reference>
<reference key="2">
    <citation type="journal article" date="2005" name="Nature">
        <title>The genome of the social amoeba Dictyostelium discoideum.</title>
        <authorList>
            <person name="Eichinger L."/>
            <person name="Pachebat J.A."/>
            <person name="Gloeckner G."/>
            <person name="Rajandream M.A."/>
            <person name="Sucgang R."/>
            <person name="Berriman M."/>
            <person name="Song J."/>
            <person name="Olsen R."/>
            <person name="Szafranski K."/>
            <person name="Xu Q."/>
            <person name="Tunggal B."/>
            <person name="Kummerfeld S."/>
            <person name="Madera M."/>
            <person name="Konfortov B.A."/>
            <person name="Rivero F."/>
            <person name="Bankier A.T."/>
            <person name="Lehmann R."/>
            <person name="Hamlin N."/>
            <person name="Davies R."/>
            <person name="Gaudet P."/>
            <person name="Fey P."/>
            <person name="Pilcher K."/>
            <person name="Chen G."/>
            <person name="Saunders D."/>
            <person name="Sodergren E.J."/>
            <person name="Davis P."/>
            <person name="Kerhornou A."/>
            <person name="Nie X."/>
            <person name="Hall N."/>
            <person name="Anjard C."/>
            <person name="Hemphill L."/>
            <person name="Bason N."/>
            <person name="Farbrother P."/>
            <person name="Desany B."/>
            <person name="Just E."/>
            <person name="Morio T."/>
            <person name="Rost R."/>
            <person name="Churcher C.M."/>
            <person name="Cooper J."/>
            <person name="Haydock S."/>
            <person name="van Driessche N."/>
            <person name="Cronin A."/>
            <person name="Goodhead I."/>
            <person name="Muzny D.M."/>
            <person name="Mourier T."/>
            <person name="Pain A."/>
            <person name="Lu M."/>
            <person name="Harper D."/>
            <person name="Lindsay R."/>
            <person name="Hauser H."/>
            <person name="James K.D."/>
            <person name="Quiles M."/>
            <person name="Madan Babu M."/>
            <person name="Saito T."/>
            <person name="Buchrieser C."/>
            <person name="Wardroper A."/>
            <person name="Felder M."/>
            <person name="Thangavelu M."/>
            <person name="Johnson D."/>
            <person name="Knights A."/>
            <person name="Loulseged H."/>
            <person name="Mungall K.L."/>
            <person name="Oliver K."/>
            <person name="Price C."/>
            <person name="Quail M.A."/>
            <person name="Urushihara H."/>
            <person name="Hernandez J."/>
            <person name="Rabbinowitsch E."/>
            <person name="Steffen D."/>
            <person name="Sanders M."/>
            <person name="Ma J."/>
            <person name="Kohara Y."/>
            <person name="Sharp S."/>
            <person name="Simmonds M.N."/>
            <person name="Spiegler S."/>
            <person name="Tivey A."/>
            <person name="Sugano S."/>
            <person name="White B."/>
            <person name="Walker D."/>
            <person name="Woodward J.R."/>
            <person name="Winckler T."/>
            <person name="Tanaka Y."/>
            <person name="Shaulsky G."/>
            <person name="Schleicher M."/>
            <person name="Weinstock G.M."/>
            <person name="Rosenthal A."/>
            <person name="Cox E.C."/>
            <person name="Chisholm R.L."/>
            <person name="Gibbs R.A."/>
            <person name="Loomis W.F."/>
            <person name="Platzer M."/>
            <person name="Kay R.R."/>
            <person name="Williams J.G."/>
            <person name="Dear P.H."/>
            <person name="Noegel A.A."/>
            <person name="Barrell B.G."/>
            <person name="Kuspa A."/>
        </authorList>
    </citation>
    <scope>NUCLEOTIDE SEQUENCE [LARGE SCALE GENOMIC DNA]</scope>
    <source>
        <strain>AX4</strain>
    </source>
</reference>
<reference key="3">
    <citation type="journal article" date="2004" name="Proteomics">
        <title>The identification of Dictyostelium phosphoproteins altered in response to the activation of RasG.</title>
        <authorList>
            <person name="Secko D.M."/>
            <person name="Insall R.H."/>
            <person name="Spiegelman G.B."/>
            <person name="Weeks G."/>
        </authorList>
    </citation>
    <scope>IDENTIFICATION BY MASS SPECTROMETRY</scope>
</reference>
<protein>
    <recommendedName>
        <fullName>Probable UDP-glucose:glycoprotein glucosyltransferase A</fullName>
        <ecNumber>2.4.1.-</ecNumber>
    </recommendedName>
    <alternativeName>
        <fullName>Developmental gene 1109 protein</fullName>
    </alternativeName>
</protein>
<organism>
    <name type="scientific">Dictyostelium discoideum</name>
    <name type="common">Social amoeba</name>
    <dbReference type="NCBI Taxonomy" id="44689"/>
    <lineage>
        <taxon>Eukaryota</taxon>
        <taxon>Amoebozoa</taxon>
        <taxon>Evosea</taxon>
        <taxon>Eumycetozoa</taxon>
        <taxon>Dictyostelia</taxon>
        <taxon>Dictyosteliales</taxon>
        <taxon>Dictyosteliaceae</taxon>
        <taxon>Dictyostelium</taxon>
    </lineage>
</organism>
<gene>
    <name type="primary">ggtA</name>
    <name type="synonym">DG1109</name>
    <name type="ORF">DDB_G0274103</name>
</gene>
<sequence length="1681" mass="192629">MARIFKFFVFLLIVFISNVLLLVESNEGDNSFSSKSIQLSLVSNWGETPSYLEAAEFLHNQDKSLFWKFIEEFNKIDFSTNYSDKIYYESTISLMKSVLSSNTQFLSEFLSIDLAMRTYSPRVETYRQLAISNMKLNNIEHSITTADNKTITLFNSGGWVQIKNKIITDVNEINESLFKDVAVVDDEENEFIRLYDFDHIFPTLANTVSSSSSSPSSIPIVILYVDIKSEFFKLVHPKLKQFSQMGKIKYCLRYVVQESNQKLNLQGYGYELSIKNLEYKVMDDSAIKKDIIIDGVKSKTIINIPNEDVQGFNFHKLQKRKPELTSKLSTFRSYLMAKSQEAKELKVWELKDLGIQSAQKIIQSGDPLRSLEYISQKFPTLSNSLSKITLNESLKSVIESNQKIIPSTTDQTLLLNGRLIDTNELSPIELSRIILEEYEHSTTIQQQGPLSSKTVQDIISAQLPIRIQLLPTKEELELNGGNEPFVSLNNLELDYIYRQWEPKLQSSVLDKPVTSPQDIFIRKNLLTTVIVLDWNNINTFEIIPEIQEMVQGNSLIPTRIQLLFNTKSNNNNNNNNNNNDQNSQTSNFIQGKDLAKVFLTIKNSNLGNRGAFFFITALNYFKKMYIPNELGITRSVLSSSFQAVLQQMGGSVRSLQHALTNTDFDNLLESSNQLIERLELLDTTTSQSTTTTTTTKILPKVFVNGVQVKYSNIDQLSFDLLVSLYDEFDNLKPLFKESILSTTTAQYYETILTSSYWKDNNLPFLKKLNSMISNEKYSHLITNSKNRNQEVDAQNVLKNLLYFRNNENKDEQNLLNLIVIGDFDHYNTRDISLELLRQLEKGELKNCKLTFISNPIDINSVVNTAGNENQILGKLITILKHYGKILTPQLVIGLFEKVQSDPTIIDSFKTMKQIIELSGFDIAANDIWVAQSVNLFKQSSKVCKQYLGIQSTNKSPLSILVNGRIITPPLSYDDAASFIQSDFKLLLEIEMIKAKKTFELLNSDPILKDKSNLKISDLLNKVQSLVGYYYNGNNQLDSNIKRKRIPNSLSISFSHKPPTLSSSSSSSSSNSNDVPLKFLMIINPFNKVSQKLVPMVREFSNKLNIPVDVILNPPVSLSELPLKTYYTYVIKLSSEFNNENVLYNQPLGIATDIPEDRVVTLALDIPSSWLVQPIIAKYDLDNIRLKDLGDEQVLTAVYELENIVIEGSANDMTTDNAPAGLELLLNPISTQTNKTQDTIVMNNFGYYQLKSNPGIWKLTIAPGRSSDIMDMVDHPNQKEKETFVIVPHRLVVIDSLYQSLSSLSVVRKAGQELRPILQPIDEYEKQKEQEKEQKLKQNSSGFFSNLFSSKNDATDSVATHQKKSNLDTIHIFSVASGHLYERFLKIMMLSVVKNTESPIKFWFLKNYLSPAFKEFIPEMAKEYGFQYELVTYKWPWWLRKQTEKQRIIWSYKILFLDVLFPLDVPKIIFVDADQVVRTDLKELWDMDLHGASLGYTPFCDSNKDTEGFRFWKSGYWRQHLAGRSYHISALYVVDLVRFRRLAAGDQLRATYDQLSRDPNSLANLDQDLPNYLQHYVRIHSLPQEWLWCETWCDQESKSKAKTIDLCNNPLTKTPKLENAVRIIDEWTTLDNEAKEFELKIDQSKHHRQIELDHQNQLPNSKPIENIDDILLNLAESQKDLF</sequence>
<accession>Q8T191</accession>
<accession>Q555Q8</accession>
<feature type="signal peptide" evidence="2">
    <location>
        <begin position="1"/>
        <end position="25"/>
    </location>
</feature>
<feature type="chain" id="PRO_0000327469" description="Probable UDP-glucose:glycoprotein glucosyltransferase A">
    <location>
        <begin position="26"/>
        <end position="1681"/>
    </location>
</feature>
<feature type="region of interest" description="Disordered" evidence="3">
    <location>
        <begin position="566"/>
        <end position="586"/>
    </location>
</feature>
<feature type="region of interest" description="Glucosyltransferase" evidence="1">
    <location>
        <begin position="1346"/>
        <end position="1657"/>
    </location>
</feature>
<feature type="compositionally biased region" description="Low complexity" evidence="3">
    <location>
        <begin position="569"/>
        <end position="579"/>
    </location>
</feature>
<feature type="glycosylation site" description="N-linked (GlcNAc...) asparagine" evidence="2">
    <location>
        <position position="81"/>
    </location>
</feature>
<feature type="glycosylation site" description="N-linked (GlcNAc...) asparagine" evidence="2">
    <location>
        <position position="148"/>
    </location>
</feature>
<feature type="glycosylation site" description="N-linked (GlcNAc...) asparagine" evidence="2">
    <location>
        <position position="174"/>
    </location>
</feature>
<feature type="glycosylation site" description="N-linked (GlcNAc...) asparagine" evidence="2">
    <location>
        <position position="391"/>
    </location>
</feature>
<feature type="glycosylation site" description="N-linked (GlcNAc...) asparagine" evidence="2">
    <location>
        <position position="1233"/>
    </location>
</feature>
<feature type="glycosylation site" description="N-linked (GlcNAc...) asparagine" evidence="2">
    <location>
        <position position="1338"/>
    </location>
</feature>
<dbReference type="EC" id="2.4.1.-"/>
<dbReference type="EMBL" id="AAFI02000012">
    <property type="protein sequence ID" value="EAL69944.1"/>
    <property type="molecule type" value="Genomic_DNA"/>
</dbReference>
<dbReference type="RefSeq" id="XP_644005.1">
    <property type="nucleotide sequence ID" value="XM_638913.1"/>
</dbReference>
<dbReference type="SMR" id="Q8T191"/>
<dbReference type="FunCoup" id="Q8T191">
    <property type="interactions" value="789"/>
</dbReference>
<dbReference type="STRING" id="44689.Q8T191"/>
<dbReference type="CAZy" id="GT24">
    <property type="family name" value="Glycosyltransferase Family 24"/>
</dbReference>
<dbReference type="GlyCosmos" id="Q8T191">
    <property type="glycosylation" value="6 sites, No reported glycans"/>
</dbReference>
<dbReference type="GlyGen" id="Q8T191">
    <property type="glycosylation" value="6 sites"/>
</dbReference>
<dbReference type="PaxDb" id="44689-DDB0220030"/>
<dbReference type="EnsemblProtists" id="EAL69944">
    <property type="protein sequence ID" value="EAL69944"/>
    <property type="gene ID" value="DDB_G0274103"/>
</dbReference>
<dbReference type="GeneID" id="8619433"/>
<dbReference type="KEGG" id="ddi:DDB_G0274103"/>
<dbReference type="dictyBase" id="DDB_G0274103">
    <property type="gene designation" value="ggtA"/>
</dbReference>
<dbReference type="VEuPathDB" id="AmoebaDB:DDB_G0274103"/>
<dbReference type="eggNOG" id="KOG1879">
    <property type="taxonomic scope" value="Eukaryota"/>
</dbReference>
<dbReference type="HOGENOM" id="CLU_002668_1_0_1"/>
<dbReference type="InParanoid" id="Q8T191"/>
<dbReference type="OMA" id="RQTKTRF"/>
<dbReference type="PhylomeDB" id="Q8T191"/>
<dbReference type="UniPathway" id="UPA00378"/>
<dbReference type="PRO" id="PR:Q8T191"/>
<dbReference type="Proteomes" id="UP000002195">
    <property type="component" value="Chromosome 2"/>
</dbReference>
<dbReference type="GO" id="GO:0005783">
    <property type="term" value="C:endoplasmic reticulum"/>
    <property type="evidence" value="ECO:0000318"/>
    <property type="project" value="GO_Central"/>
</dbReference>
<dbReference type="GO" id="GO:0005788">
    <property type="term" value="C:endoplasmic reticulum lumen"/>
    <property type="evidence" value="ECO:0007669"/>
    <property type="project" value="UniProtKB-SubCell"/>
</dbReference>
<dbReference type="GO" id="GO:0005793">
    <property type="term" value="C:endoplasmic reticulum-Golgi intermediate compartment"/>
    <property type="evidence" value="ECO:0007669"/>
    <property type="project" value="UniProtKB-SubCell"/>
</dbReference>
<dbReference type="GO" id="GO:0003980">
    <property type="term" value="F:UDP-glucose:glycoprotein glucosyltransferase activity"/>
    <property type="evidence" value="ECO:0000318"/>
    <property type="project" value="GO_Central"/>
</dbReference>
<dbReference type="GO" id="GO:0051082">
    <property type="term" value="F:unfolded protein binding"/>
    <property type="evidence" value="ECO:0000318"/>
    <property type="project" value="GO_Central"/>
</dbReference>
<dbReference type="GO" id="GO:0018279">
    <property type="term" value="P:protein N-linked glycosylation via asparagine"/>
    <property type="evidence" value="ECO:0000318"/>
    <property type="project" value="GO_Central"/>
</dbReference>
<dbReference type="GO" id="GO:0030587">
    <property type="term" value="P:sorocarp development"/>
    <property type="evidence" value="ECO:0007001"/>
    <property type="project" value="dictyBase"/>
</dbReference>
<dbReference type="CDD" id="cd06432">
    <property type="entry name" value="GT8_HUGT1_C_like"/>
    <property type="match status" value="1"/>
</dbReference>
<dbReference type="Gene3D" id="3.90.550.10">
    <property type="entry name" value="Spore Coat Polysaccharide Biosynthesis Protein SpsA, Chain A"/>
    <property type="match status" value="1"/>
</dbReference>
<dbReference type="InterPro" id="IPR040497">
    <property type="entry name" value="Glyco_transf_24"/>
</dbReference>
<dbReference type="InterPro" id="IPR029044">
    <property type="entry name" value="Nucleotide-diphossugar_trans"/>
</dbReference>
<dbReference type="InterPro" id="IPR009448">
    <property type="entry name" value="UDP-g_GGtrans"/>
</dbReference>
<dbReference type="InterPro" id="IPR040693">
    <property type="entry name" value="UGGT_TRXL_1"/>
</dbReference>
<dbReference type="InterPro" id="IPR040694">
    <property type="entry name" value="UGGT_TRXL_2"/>
</dbReference>
<dbReference type="InterPro" id="IPR040692">
    <property type="entry name" value="UGGT_TRXL_3"/>
</dbReference>
<dbReference type="InterPro" id="IPR040525">
    <property type="entry name" value="UGGT_TRXL_4"/>
</dbReference>
<dbReference type="PANTHER" id="PTHR11226">
    <property type="entry name" value="UDP-GLUCOSE GLYCOPROTEIN:GLUCOSYLTRANSFERASE"/>
    <property type="match status" value="1"/>
</dbReference>
<dbReference type="PANTHER" id="PTHR11226:SF0">
    <property type="entry name" value="UDP-GLUCOSE:GLYCOPROTEIN GLUCOSYLTRANSFERASE"/>
    <property type="match status" value="1"/>
</dbReference>
<dbReference type="Pfam" id="PF18404">
    <property type="entry name" value="Glyco_transf_24"/>
    <property type="match status" value="1"/>
</dbReference>
<dbReference type="Pfam" id="PF18400">
    <property type="entry name" value="Thioredoxin_12"/>
    <property type="match status" value="1"/>
</dbReference>
<dbReference type="Pfam" id="PF18401">
    <property type="entry name" value="Thioredoxin_13"/>
    <property type="match status" value="1"/>
</dbReference>
<dbReference type="Pfam" id="PF18402">
    <property type="entry name" value="Thioredoxin_14"/>
    <property type="match status" value="1"/>
</dbReference>
<dbReference type="Pfam" id="PF18403">
    <property type="entry name" value="Thioredoxin_15"/>
    <property type="match status" value="1"/>
</dbReference>
<dbReference type="Pfam" id="PF06427">
    <property type="entry name" value="UDP-g_GGTase"/>
    <property type="match status" value="1"/>
</dbReference>
<dbReference type="SUPFAM" id="SSF53448">
    <property type="entry name" value="Nucleotide-diphospho-sugar transferases"/>
    <property type="match status" value="1"/>
</dbReference>
<evidence type="ECO:0000250" key="1"/>
<evidence type="ECO:0000255" key="2"/>
<evidence type="ECO:0000256" key="3">
    <source>
        <dbReference type="SAM" id="MobiDB-lite"/>
    </source>
</evidence>
<evidence type="ECO:0000305" key="4"/>
<name>UGGG_DICDI</name>
<proteinExistence type="evidence at protein level"/>
<comment type="function">
    <text evidence="1">Recognizes glycoproteins with minor folding defects. Reglucosylates single N-glycans near the misfolded part of the protein, thus providing quality control for protein folding in the endoplasmic reticulum (By similarity).</text>
</comment>
<comment type="cofactor">
    <cofactor evidence="1">
        <name>Ca(2+)</name>
        <dbReference type="ChEBI" id="CHEBI:29108"/>
    </cofactor>
    <cofactor evidence="1">
        <name>Mn(2+)</name>
        <dbReference type="ChEBI" id="CHEBI:29035"/>
    </cofactor>
</comment>
<comment type="pathway">
    <text>Protein modification; protein glycosylation.</text>
</comment>
<comment type="subcellular location">
    <subcellularLocation>
        <location>Endoplasmic reticulum lumen</location>
    </subcellularLocation>
    <subcellularLocation>
        <location evidence="1">Endoplasmic reticulum-Golgi intermediate compartment</location>
    </subcellularLocation>
</comment>
<comment type="similarity">
    <text evidence="4">Belongs to the glycosyltransferase 8 family.</text>
</comment>
<keyword id="KW-0256">Endoplasmic reticulum</keyword>
<keyword id="KW-0325">Glycoprotein</keyword>
<keyword id="KW-0328">Glycosyltransferase</keyword>
<keyword id="KW-1185">Reference proteome</keyword>
<keyword id="KW-0732">Signal</keyword>
<keyword id="KW-0808">Transferase</keyword>